<organism>
    <name type="scientific">Saccharomyces cerevisiae (strain ATCC 204508 / S288c)</name>
    <name type="common">Baker's yeast</name>
    <dbReference type="NCBI Taxonomy" id="559292"/>
    <lineage>
        <taxon>Eukaryota</taxon>
        <taxon>Fungi</taxon>
        <taxon>Dikarya</taxon>
        <taxon>Ascomycota</taxon>
        <taxon>Saccharomycotina</taxon>
        <taxon>Saccharomycetes</taxon>
        <taxon>Saccharomycetales</taxon>
        <taxon>Saccharomycetaceae</taxon>
        <taxon>Saccharomyces</taxon>
    </lineage>
</organism>
<sequence length="833" mass="95481">MITLLLYLCVICNAIVLIRADSIADPWPEARHLLNTIAKSRDPMKEAAMEPNADEFVGFYVPMDYSPRNEEKNYQSIWQNEITDSQRHIYELLVQSSEQFNNSEATYTLSQIHLWSQYNFPHNMTLAHKYLEKFNDLTHFTNHSAIFDLAVMYATGGCASGNDQTVIPQDSAKALLYYQRAAQLGNLKAKQVLAYKYYSGFNVPRNFHKSLVLYRDIAEQLRKSYSRDEWDIVFPYWESYNVRISDFESGLLGKGLNSVPSSTVRKRTTRPDIGSPFIAQVNGVQMTLQIEPMGRFAFNGNDGNINGDEDDEDASERRIIRIYYAALNDYKGTYSQSRNCERAKNLLELTYKEFQPHVDNLDPLQVFYYVRCLQLLGHMYFTGEGSSKPNIHMAEEILTTSLEISRRAQGPIGRACIDLGLINQYITNNISQAISYYMKAMKTQANNGIVEFQLSKLATSFPEEKIGDPFNLMETAYLNGFIPAIYEFAVMIESGMNSKSSVENTAYLFKTFVDKNEAIMAPKLRTAFAALINDRSEVALWAYSQLAEQGYETAQVSAAYLMYQLPYEFEDPPRTTDQRKTLAISYYTRAFKQGNIDAGVVAGDIYFQMQNYSKAMALYQGAALKYSIQAIWNLGYMHEHGLGVNRDFHLAKRYYDQVSEHDHRFYLASKLSVLKLHLKSWLTWITREKVNYWKPSSPLNPNEDTQHSKTSWYKQLTKILQRMRHKEDSDKAAEDSHKHRTVVQNGANHRGDDQEEASEILGFQMEDLVTMGCILGIFLLSILMSTLAARRGWNVRFNGAQLNANGNRQQEQQQQQQAQGPPGWDFNVQIFAI</sequence>
<name>HRD3_YEAST</name>
<gene>
    <name type="primary">HRD3</name>
    <name type="ordered locus">YLR207W</name>
</gene>
<comment type="function">
    <text evidence="3 4 5 6 7 8 9 10 11 14 15">Component of the endoplasmic reticulum quality control (ERQC) system involved in ubiquitin-dependent degradation of misfolded endoplasmic reticulum proteins. Component of the HRD1 ubiquitin ligase complex, which is part of the ERAD-L and ERAD-M pathways responsible for the rapid degradation of soluble lumenal and membrane proteins with misfolded lumenal domains (ERAD-L), or ER-membrane proteins with misfolded transmembrane domains (ERAD-M). ERAD-L substrates are ubiquitinated through HRD1 in conjunction with the E2 ubiquitin-conjugating enzymes UBC1 and UBC7-CUE1. Ubiquitinated substrates are then removed to the cytosol via the action of the CDC48-NPL4-UFD1 ATPase complex and targeted to the proteasome. ERAD-M substrates are processed by the same HRD1-HRD3 core complex, but only a subset of the other components is required for ERAD-M. Stabilizes the HRD1 ubiquitin-protein ligase. Also functions in recruiting misfolded protein substrates in conjunction with YOS9.</text>
</comment>
<comment type="subunit">
    <text evidence="6 7 8 9 10 11 12 13 14">Component of the HRD1 ubiquitin ligase complex which contains the E3 ligase HRD1, its cofactors HRD3, USA1 and DER1, substrate recruiting factor YOS9 and CDC48-binding protein UBX2 (PubMed:16845381, PubMed:16873065, PubMed:16873066). Within the complex, interacts directly with HRD1 and YOS9 (via N-terminus) (PubMed:11018054, PubMed:22262864, PubMed:28682307). In ERAD-L, HRD3 and YOS9 jointly bind misfolded glycoproteins in the endoplasmic reticulum (ER) lumen (PubMed:32327568). Movement of ERAD-L substrates through the ER membrane is facilitated by HRD1 and DER1 which have lateral gates facing each other and which distort the membrane region between the lateral gates, making it much thinner than a normal phospholipid bilayer (PubMed:32327568). Substrates insert into the membrane as a hairpin loop with one strand interacting with DER1 and the other with HRD1 (PubMed:32327568). The HRD1 complex interacts with the heterotrimeric CDC48-NPL4-UFD1 ATPase complex which is recruited by UBX2 via its interaction with CDC48 and which moves ubiquitinated substrates to the cytosol for targeting to the proteasome (PubMed:16619026, PubMed:16873066). The HRD1 complex interacts with the ERAD substrates HMG1 and HMG2 (PubMed:11390656). Interacts with KAR2 (PubMed:16873065).</text>
</comment>
<comment type="interaction">
    <interactant intactId="EBI-31647">
        <id>Q05787</id>
    </interactant>
    <interactant intactId="EBI-4308">
        <id>P25694</id>
        <label>CDC48</label>
    </interactant>
    <organismsDiffer>false</organismsDiffer>
    <experiments>7</experiments>
</comment>
<comment type="interaction">
    <interactant intactId="EBI-31647">
        <id>Q05787</id>
    </interactant>
    <interactant intactId="EBI-5761">
        <id>P38307</id>
        <label>DER1</label>
    </interactant>
    <organismsDiffer>false</organismsDiffer>
    <experiments>3</experiments>
</comment>
<comment type="interaction">
    <interactant intactId="EBI-31647">
        <id>Q05787</id>
    </interactant>
    <interactant intactId="EBI-37613">
        <id>Q08109</id>
        <label>HRD1</label>
    </interactant>
    <organismsDiffer>false</organismsDiffer>
    <experiments>12</experiments>
</comment>
<comment type="interaction">
    <interactant intactId="EBI-31647">
        <id>Q05787</id>
    </interactant>
    <interactant intactId="EBI-4153">
        <id>P00729</id>
        <label>PRC1</label>
    </interactant>
    <organismsDiffer>false</organismsDiffer>
    <experiments>6</experiments>
</comment>
<comment type="interaction">
    <interactant intactId="EBI-31647">
        <id>Q05787</id>
    </interactant>
    <interactant intactId="EBI-16400">
        <id>P32915</id>
        <label>SEC61</label>
    </interactant>
    <organismsDiffer>false</organismsDiffer>
    <experiments>2</experiments>
</comment>
<comment type="interaction">
    <interactant intactId="EBI-31647">
        <id>Q05787</id>
    </interactant>
    <interactant intactId="EBI-34938">
        <id>Q99220</id>
        <label>YOS9</label>
    </interactant>
    <organismsDiffer>false</organismsDiffer>
    <experiments>9</experiments>
</comment>
<comment type="subcellular location">
    <subcellularLocation>
        <location evidence="16">Endoplasmic reticulum membrane</location>
        <topology evidence="16">Single-pass membrane protein</topology>
    </subcellularLocation>
</comment>
<comment type="similarity">
    <text evidence="16">Belongs to the sel-1 family.</text>
</comment>
<reference key="1">
    <citation type="journal article" date="1997" name="Nature">
        <title>The nucleotide sequence of Saccharomyces cerevisiae chromosome XII.</title>
        <authorList>
            <person name="Johnston M."/>
            <person name="Hillier L.W."/>
            <person name="Riles L."/>
            <person name="Albermann K."/>
            <person name="Andre B."/>
            <person name="Ansorge W."/>
            <person name="Benes V."/>
            <person name="Brueckner M."/>
            <person name="Delius H."/>
            <person name="Dubois E."/>
            <person name="Duesterhoeft A."/>
            <person name="Entian K.-D."/>
            <person name="Floeth M."/>
            <person name="Goffeau A."/>
            <person name="Hebling U."/>
            <person name="Heumann K."/>
            <person name="Heuss-Neitzel D."/>
            <person name="Hilbert H."/>
            <person name="Hilger F."/>
            <person name="Kleine K."/>
            <person name="Koetter P."/>
            <person name="Louis E.J."/>
            <person name="Messenguy F."/>
            <person name="Mewes H.-W."/>
            <person name="Miosga T."/>
            <person name="Moestl D."/>
            <person name="Mueller-Auer S."/>
            <person name="Nentwich U."/>
            <person name="Obermaier B."/>
            <person name="Piravandi E."/>
            <person name="Pohl T.M."/>
            <person name="Portetelle D."/>
            <person name="Purnelle B."/>
            <person name="Rechmann S."/>
            <person name="Rieger M."/>
            <person name="Rinke M."/>
            <person name="Rose M."/>
            <person name="Scharfe M."/>
            <person name="Scherens B."/>
            <person name="Scholler P."/>
            <person name="Schwager C."/>
            <person name="Schwarz S."/>
            <person name="Underwood A.P."/>
            <person name="Urrestarazu L.A."/>
            <person name="Vandenbol M."/>
            <person name="Verhasselt P."/>
            <person name="Vierendeels F."/>
            <person name="Voet M."/>
            <person name="Volckaert G."/>
            <person name="Voss H."/>
            <person name="Wambutt R."/>
            <person name="Wedler E."/>
            <person name="Wedler H."/>
            <person name="Zimmermann F.K."/>
            <person name="Zollner A."/>
            <person name="Hani J."/>
            <person name="Hoheisel J.D."/>
        </authorList>
    </citation>
    <scope>NUCLEOTIDE SEQUENCE [LARGE SCALE GENOMIC DNA]</scope>
    <source>
        <strain>ATCC 204508 / S288c</strain>
    </source>
</reference>
<reference key="2">
    <citation type="journal article" date="2014" name="G3 (Bethesda)">
        <title>The reference genome sequence of Saccharomyces cerevisiae: Then and now.</title>
        <authorList>
            <person name="Engel S.R."/>
            <person name="Dietrich F.S."/>
            <person name="Fisk D.G."/>
            <person name="Binkley G."/>
            <person name="Balakrishnan R."/>
            <person name="Costanzo M.C."/>
            <person name="Dwight S.S."/>
            <person name="Hitz B.C."/>
            <person name="Karra K."/>
            <person name="Nash R.S."/>
            <person name="Weng S."/>
            <person name="Wong E.D."/>
            <person name="Lloyd P."/>
            <person name="Skrzypek M.S."/>
            <person name="Miyasato S.R."/>
            <person name="Simison M."/>
            <person name="Cherry J.M."/>
        </authorList>
    </citation>
    <scope>GENOME REANNOTATION</scope>
    <source>
        <strain>ATCC 204508 / S288c</strain>
    </source>
</reference>
<reference key="3">
    <citation type="journal article" date="1996" name="Mol. Biol. Cell">
        <title>Role of 26S proteasome and HRD genes in the degradation of 3-hydroxy-3-methylglutaryl-CoA reductase, an integral endoplasmic reticulum membrane protein.</title>
        <authorList>
            <person name="Hampton R.Y."/>
            <person name="Gardner R.G."/>
            <person name="Rine J."/>
        </authorList>
    </citation>
    <scope>FUNCTION</scope>
</reference>
<reference key="4">
    <citation type="journal article" date="1999" name="FEBS Lett.">
        <title>A RING-H2 finger motif is essential for the function of Der3/Hrd1 in endoplasmic reticulum associated protein degradation in the yeast Saccharomyces cerevisiae.</title>
        <authorList>
            <person name="Bordallo J."/>
            <person name="Wolf D.H."/>
        </authorList>
    </citation>
    <scope>FUNCTION</scope>
</reference>
<reference key="5">
    <citation type="journal article" date="1999" name="J. Cell Sci.">
        <title>Genetic interactions of Hrd3p and Der3p/Hrd1p with Sec61p suggest a retro-translocation complex mediating protein transport for ER degradation.</title>
        <authorList>
            <person name="Plemper R.K."/>
            <person name="Bordallo J."/>
            <person name="Deak P.M."/>
            <person name="Taxis C."/>
            <person name="Hitt R."/>
            <person name="Wolf D.H."/>
        </authorList>
    </citation>
    <scope>FUNCTION</scope>
</reference>
<reference key="6">
    <citation type="journal article" date="2000" name="J. Cell Biol.">
        <title>Endoplasmic reticulum degradation requires lumen to cytosol signaling. Transmembrane control of Hrd1p by Hrd3p.</title>
        <authorList>
            <person name="Gardner R.G."/>
            <person name="Swarbrick G.M."/>
            <person name="Bays N.W."/>
            <person name="Cronin S.R."/>
            <person name="Wilhovsky S."/>
            <person name="Seelig L.P."/>
            <person name="Kim C."/>
            <person name="Hampton R.Y."/>
        </authorList>
    </citation>
    <scope>FUNCTION</scope>
    <scope>SUBCELLULAR LOCATION</scope>
    <scope>INTERACTION WITH HRD1</scope>
</reference>
<reference key="7">
    <citation type="journal article" date="2000" name="Mol. Biol. Cell">
        <title>HRD gene dependence of endoplasmic reticulum-associated degradation.</title>
        <authorList>
            <person name="Wilhovsky S."/>
            <person name="Gardner R.G."/>
            <person name="Hampton R.Y."/>
        </authorList>
    </citation>
    <scope>FUNCTION</scope>
</reference>
<reference key="8">
    <citation type="journal article" date="2001" name="Mol. Cell. Biol.">
        <title>In vivo action of the HRD ubiquitin ligase complex: mechanisms of endoplasmic reticulum quality control and sterol regulation.</title>
        <authorList>
            <person name="Gardner R.G."/>
            <person name="Shearer A.G."/>
            <person name="Hampton R.Y."/>
        </authorList>
    </citation>
    <scope>FUNCTION</scope>
    <scope>INTERACTION WITH HMG1 AND HMG2</scope>
</reference>
<reference key="9">
    <citation type="journal article" date="2006" name="Cell">
        <title>A luminal surveillance complex that selects misfolded glycoproteins for ER-associated degradation.</title>
        <authorList>
            <person name="Denic V."/>
            <person name="Quan E.M."/>
            <person name="Weissman J.S."/>
        </authorList>
    </citation>
    <scope>FUNCTION</scope>
    <scope>IDENTIFICATION IN THE HRD1 COMPLEX</scope>
    <scope>INTERACTION WITH KAR2</scope>
</reference>
<reference key="10">
    <citation type="journal article" date="2006" name="Cell">
        <title>Distinct ubiquitin-ligase complexes define convergent pathways for the degradation of ER proteins.</title>
        <authorList>
            <person name="Carvalho P."/>
            <person name="Goder V."/>
            <person name="Rapoport T.A."/>
        </authorList>
    </citation>
    <scope>FUNCTION</scope>
    <scope>IDENTIFICATION IN THE HRD1 COMPLEX</scope>
</reference>
<reference key="11">
    <citation type="journal article" date="2006" name="EMBO J.">
        <title>The Hrd1p ligase complex forms a linchpin between ER-lumenal substrate selection and Cdc48p recruitment.</title>
        <authorList>
            <person name="Gauss R."/>
            <person name="Sommer T."/>
            <person name="Jarosch E."/>
        </authorList>
    </citation>
    <scope>FUNCTION</scope>
    <scope>INTERACTION WITH CDC48 AND DER1</scope>
</reference>
<reference key="12">
    <citation type="journal article" date="2006" name="Nat. Cell Biol.">
        <title>A complex of Yos9p and the HRD ligase integrates endoplasmic reticulum quality control into the degradation machinery.</title>
        <authorList>
            <person name="Gauss R."/>
            <person name="Jarosch E."/>
            <person name="Sommer T."/>
            <person name="Hirsch C."/>
        </authorList>
    </citation>
    <scope>FUNCTION</scope>
    <scope>INTERACTION WITH HRD1 AND YOS9</scope>
</reference>
<reference key="13">
    <citation type="journal article" date="2012" name="J. Biol. Chem.">
        <title>Structural and biochemical basis of Yos9 protein dimerization and possible contribution to self-association of 3-hydroxy-3-methylglutaryl-coenzyme A reductase degradation ubiquitin-ligase complex.</title>
        <authorList>
            <person name="Hanna J."/>
            <person name="Schuetz A."/>
            <person name="Zimmermann F."/>
            <person name="Behlke J."/>
            <person name="Sommer T."/>
            <person name="Heinemann U."/>
        </authorList>
    </citation>
    <scope>INTERACTION WITH YOS9</scope>
</reference>
<reference evidence="17" key="14">
    <citation type="journal article" date="2017" name="Nature">
        <title>Cryo-EM structure of the protein-conducting ERAD channel Hrd1 in complex with Hrd3.</title>
        <authorList>
            <person name="Schoebel S."/>
            <person name="Mi W."/>
            <person name="Stein A."/>
            <person name="Ovchinnikov S."/>
            <person name="Pavlovicz R."/>
            <person name="DiMaio F."/>
            <person name="Baker D."/>
            <person name="Chambers M.G."/>
            <person name="Su H."/>
            <person name="Li D."/>
            <person name="Rapoport T.A."/>
            <person name="Liao M."/>
        </authorList>
    </citation>
    <scope>STRUCTURE BY ELECTRON MICROSCOPY (3.90 ANGSTROMS) OF 1-767 IN COMPLEX WITH HRD1</scope>
</reference>
<reference evidence="18 19 20 21 22" key="15">
    <citation type="journal article" date="2020" name="Science">
        <title>Structural basis of ER-associated protein degradation mediated by the Hrd1 ubiquitin ligase complex.</title>
        <authorList>
            <person name="Wu X."/>
            <person name="Siggel M."/>
            <person name="Ovchinnikov S."/>
            <person name="Mi W."/>
            <person name="Svetlov V."/>
            <person name="Nudler E."/>
            <person name="Liao M."/>
            <person name="Hummer G."/>
            <person name="Rapoport T.A."/>
        </authorList>
    </citation>
    <scope>STRUCTURE BY ELECTRON MICROSCOPY (4.10 ANGSTROMS) OF 1-767 IN COMPLEX WITH DER1; HRD1 AND USA1</scope>
    <scope>STRUCTURE BY ELECTRON MICROSCOPY (3.70 ANGSTROMS) OF 1-767 IN COMPLEX WITH YOS9</scope>
    <scope>FUNCTION</scope>
</reference>
<keyword id="KW-0002">3D-structure</keyword>
<keyword id="KW-0256">Endoplasmic reticulum</keyword>
<keyword id="KW-0325">Glycoprotein</keyword>
<keyword id="KW-0472">Membrane</keyword>
<keyword id="KW-1185">Reference proteome</keyword>
<keyword id="KW-0677">Repeat</keyword>
<keyword id="KW-0732">Signal</keyword>
<keyword id="KW-0812">Transmembrane</keyword>
<keyword id="KW-1133">Transmembrane helix</keyword>
<protein>
    <recommendedName>
        <fullName>ERAD-associated E3 ubiquitin-protein ligase component HRD3</fullName>
    </recommendedName>
    <alternativeName>
        <fullName>HMG-CoA reductase degradation protein 3</fullName>
    </alternativeName>
</protein>
<dbReference type="EMBL" id="U14913">
    <property type="protein sequence ID" value="AAB67427.1"/>
    <property type="molecule type" value="Genomic_DNA"/>
</dbReference>
<dbReference type="EMBL" id="BK006945">
    <property type="protein sequence ID" value="DAA09524.1"/>
    <property type="molecule type" value="Genomic_DNA"/>
</dbReference>
<dbReference type="PIR" id="S48558">
    <property type="entry name" value="S48558"/>
</dbReference>
<dbReference type="RefSeq" id="NP_013308.1">
    <property type="nucleotide sequence ID" value="NM_001182094.1"/>
</dbReference>
<dbReference type="PDB" id="5V7V">
    <property type="method" value="EM"/>
    <property type="resolution" value="3.90 A"/>
    <property type="chains" value="A=1-767"/>
</dbReference>
<dbReference type="PDB" id="6VJY">
    <property type="method" value="EM"/>
    <property type="resolution" value="4.30 A"/>
    <property type="chains" value="A=1-767"/>
</dbReference>
<dbReference type="PDB" id="6VJZ">
    <property type="method" value="EM"/>
    <property type="resolution" value="4.30 A"/>
    <property type="chains" value="A=1-767"/>
</dbReference>
<dbReference type="PDB" id="6VK0">
    <property type="method" value="EM"/>
    <property type="resolution" value="4.10 A"/>
    <property type="chains" value="A=1-767"/>
</dbReference>
<dbReference type="PDB" id="6VK1">
    <property type="method" value="EM"/>
    <property type="resolution" value="3.90 A"/>
    <property type="chains" value="A=1-767"/>
</dbReference>
<dbReference type="PDB" id="6VK3">
    <property type="method" value="EM"/>
    <property type="resolution" value="3.70 A"/>
    <property type="chains" value="A=1-767"/>
</dbReference>
<dbReference type="PDBsum" id="5V7V"/>
<dbReference type="PDBsum" id="6VJY"/>
<dbReference type="PDBsum" id="6VJZ"/>
<dbReference type="PDBsum" id="6VK0"/>
<dbReference type="PDBsum" id="6VK1"/>
<dbReference type="PDBsum" id="6VK3"/>
<dbReference type="EMDB" id="EMD-21220"/>
<dbReference type="EMDB" id="EMD-21221"/>
<dbReference type="EMDB" id="EMD-21222"/>
<dbReference type="EMDB" id="EMD-21223"/>
<dbReference type="EMDB" id="EMD-21224"/>
<dbReference type="EMDB" id="EMD-8638"/>
<dbReference type="EMDB" id="EMD-8639"/>
<dbReference type="EMDB" id="EMD-8642"/>
<dbReference type="SMR" id="Q05787"/>
<dbReference type="BioGRID" id="31475">
    <property type="interactions" value="125"/>
</dbReference>
<dbReference type="ComplexPortal" id="CPX-1280">
    <property type="entry name" value="Luminal surveillance complex"/>
</dbReference>
<dbReference type="ComplexPortal" id="CPX-3070">
    <property type="entry name" value="HRD1 E3 ubiquitin ligase complex"/>
</dbReference>
<dbReference type="DIP" id="DIP-2843N"/>
<dbReference type="FunCoup" id="Q05787">
    <property type="interactions" value="425"/>
</dbReference>
<dbReference type="IntAct" id="Q05787">
    <property type="interactions" value="16"/>
</dbReference>
<dbReference type="MINT" id="Q05787"/>
<dbReference type="STRING" id="4932.YLR207W"/>
<dbReference type="TCDB" id="3.A.16.1.2">
    <property type="family name" value="the endoplasmic reticular retrotranslocon (er-rt) family"/>
</dbReference>
<dbReference type="GlyCosmos" id="Q05787">
    <property type="glycosylation" value="5 sites, No reported glycans"/>
</dbReference>
<dbReference type="GlyGen" id="Q05787">
    <property type="glycosylation" value="5 sites"/>
</dbReference>
<dbReference type="iPTMnet" id="Q05787"/>
<dbReference type="PaxDb" id="4932-YLR207W"/>
<dbReference type="PeptideAtlas" id="Q05787"/>
<dbReference type="EnsemblFungi" id="YLR207W_mRNA">
    <property type="protein sequence ID" value="YLR207W"/>
    <property type="gene ID" value="YLR207W"/>
</dbReference>
<dbReference type="GeneID" id="850904"/>
<dbReference type="KEGG" id="sce:YLR207W"/>
<dbReference type="AGR" id="SGD:S000004197"/>
<dbReference type="SGD" id="S000004197">
    <property type="gene designation" value="HRD3"/>
</dbReference>
<dbReference type="VEuPathDB" id="FungiDB:YLR207W"/>
<dbReference type="eggNOG" id="KOG1550">
    <property type="taxonomic scope" value="Eukaryota"/>
</dbReference>
<dbReference type="GeneTree" id="ENSGT00940000175926"/>
<dbReference type="HOGENOM" id="CLU_348239_0_0_1"/>
<dbReference type="InParanoid" id="Q05787"/>
<dbReference type="OMA" id="LLGHWMD"/>
<dbReference type="OrthoDB" id="27934at2759"/>
<dbReference type="BioCyc" id="YEAST:G3O-32325-MONOMER"/>
<dbReference type="BioGRID-ORCS" id="850904">
    <property type="hits" value="5 hits in 10 CRISPR screens"/>
</dbReference>
<dbReference type="PRO" id="PR:Q05787"/>
<dbReference type="Proteomes" id="UP000002311">
    <property type="component" value="Chromosome XII"/>
</dbReference>
<dbReference type="RNAct" id="Q05787">
    <property type="molecule type" value="protein"/>
</dbReference>
<dbReference type="GO" id="GO:0005783">
    <property type="term" value="C:endoplasmic reticulum"/>
    <property type="evidence" value="ECO:0007005"/>
    <property type="project" value="SGD"/>
</dbReference>
<dbReference type="GO" id="GO:0005789">
    <property type="term" value="C:endoplasmic reticulum membrane"/>
    <property type="evidence" value="ECO:0000353"/>
    <property type="project" value="SGD"/>
</dbReference>
<dbReference type="GO" id="GO:0000836">
    <property type="term" value="C:Hrd1p ubiquitin ligase complex"/>
    <property type="evidence" value="ECO:0000353"/>
    <property type="project" value="ComplexPortal"/>
</dbReference>
<dbReference type="GO" id="GO:0000839">
    <property type="term" value="C:Hrd1p ubiquitin ligase ERAD-L complex"/>
    <property type="evidence" value="ECO:0000314"/>
    <property type="project" value="SGD"/>
</dbReference>
<dbReference type="GO" id="GO:0000838">
    <property type="term" value="C:Hrd1p ubiquitin ligase ERAD-M complex"/>
    <property type="evidence" value="ECO:0000314"/>
    <property type="project" value="SGD"/>
</dbReference>
<dbReference type="GO" id="GO:0034099">
    <property type="term" value="C:luminal surveillance complex"/>
    <property type="evidence" value="ECO:0000314"/>
    <property type="project" value="SGD"/>
</dbReference>
<dbReference type="GO" id="GO:0002235">
    <property type="term" value="P:detection of unfolded protein"/>
    <property type="evidence" value="ECO:0000303"/>
    <property type="project" value="ComplexPortal"/>
</dbReference>
<dbReference type="GO" id="GO:0036503">
    <property type="term" value="P:ERAD pathway"/>
    <property type="evidence" value="ECO:0000314"/>
    <property type="project" value="SGD"/>
</dbReference>
<dbReference type="GO" id="GO:1905524">
    <property type="term" value="P:negative regulation of protein autoubiquitination"/>
    <property type="evidence" value="ECO:0000314"/>
    <property type="project" value="SGD"/>
</dbReference>
<dbReference type="GO" id="GO:0030970">
    <property type="term" value="P:retrograde protein transport, ER to cytosol"/>
    <property type="evidence" value="ECO:0000315"/>
    <property type="project" value="SGD"/>
</dbReference>
<dbReference type="FunFam" id="1.25.40.10:FF:001274">
    <property type="entry name" value="ERAD-associated E3 ubiquitin-protein ligase component HRD3"/>
    <property type="match status" value="1"/>
</dbReference>
<dbReference type="FunFam" id="1.25.40.10:FF:001128">
    <property type="entry name" value="HMG-CoA reductase degradation protein"/>
    <property type="match status" value="1"/>
</dbReference>
<dbReference type="Gene3D" id="1.25.40.10">
    <property type="entry name" value="Tetratricopeptide repeat domain"/>
    <property type="match status" value="2"/>
</dbReference>
<dbReference type="InterPro" id="IPR006597">
    <property type="entry name" value="Sel1-like"/>
</dbReference>
<dbReference type="InterPro" id="IPR050767">
    <property type="entry name" value="Sel1_AlgK"/>
</dbReference>
<dbReference type="InterPro" id="IPR011990">
    <property type="entry name" value="TPR-like_helical_dom_sf"/>
</dbReference>
<dbReference type="PANTHER" id="PTHR11102:SF160">
    <property type="entry name" value="ERAD-ASSOCIATED E3 UBIQUITIN-PROTEIN LIGASE COMPONENT HRD3"/>
    <property type="match status" value="1"/>
</dbReference>
<dbReference type="PANTHER" id="PTHR11102">
    <property type="entry name" value="SEL-1-LIKE PROTEIN"/>
    <property type="match status" value="1"/>
</dbReference>
<dbReference type="Pfam" id="PF08238">
    <property type="entry name" value="Sel1"/>
    <property type="match status" value="6"/>
</dbReference>
<dbReference type="SMART" id="SM00671">
    <property type="entry name" value="SEL1"/>
    <property type="match status" value="6"/>
</dbReference>
<dbReference type="SUPFAM" id="SSF81901">
    <property type="entry name" value="HCP-like"/>
    <property type="match status" value="3"/>
</dbReference>
<accession>Q05787</accession>
<accession>D6VYK8</accession>
<evidence type="ECO:0000255" key="1"/>
<evidence type="ECO:0000256" key="2">
    <source>
        <dbReference type="SAM" id="MobiDB-lite"/>
    </source>
</evidence>
<evidence type="ECO:0000269" key="3">
    <source>
    </source>
</evidence>
<evidence type="ECO:0000269" key="4">
    <source>
    </source>
</evidence>
<evidence type="ECO:0000269" key="5">
    <source>
    </source>
</evidence>
<evidence type="ECO:0000269" key="6">
    <source>
    </source>
</evidence>
<evidence type="ECO:0000269" key="7">
    <source>
    </source>
</evidence>
<evidence type="ECO:0000269" key="8">
    <source>
    </source>
</evidence>
<evidence type="ECO:0000269" key="9">
    <source>
    </source>
</evidence>
<evidence type="ECO:0000269" key="10">
    <source>
    </source>
</evidence>
<evidence type="ECO:0000269" key="11">
    <source>
    </source>
</evidence>
<evidence type="ECO:0000269" key="12">
    <source>
    </source>
</evidence>
<evidence type="ECO:0000269" key="13">
    <source>
    </source>
</evidence>
<evidence type="ECO:0000269" key="14">
    <source>
    </source>
</evidence>
<evidence type="ECO:0000269" key="15">
    <source>
    </source>
</evidence>
<evidence type="ECO:0000305" key="16"/>
<evidence type="ECO:0007744" key="17">
    <source>
        <dbReference type="PDB" id="5V7V"/>
    </source>
</evidence>
<evidence type="ECO:0007744" key="18">
    <source>
        <dbReference type="PDB" id="6VJY"/>
    </source>
</evidence>
<evidence type="ECO:0007744" key="19">
    <source>
        <dbReference type="PDB" id="6VJZ"/>
    </source>
</evidence>
<evidence type="ECO:0007744" key="20">
    <source>
        <dbReference type="PDB" id="6VK0"/>
    </source>
</evidence>
<evidence type="ECO:0007744" key="21">
    <source>
        <dbReference type="PDB" id="6VK1"/>
    </source>
</evidence>
<evidence type="ECO:0007744" key="22">
    <source>
        <dbReference type="PDB" id="6VK3"/>
    </source>
</evidence>
<proteinExistence type="evidence at protein level"/>
<feature type="signal peptide" evidence="1">
    <location>
        <begin position="1"/>
        <end position="20"/>
    </location>
</feature>
<feature type="chain" id="PRO_0000240369" description="ERAD-associated E3 ubiquitin-protein ligase component HRD3">
    <location>
        <begin position="21"/>
        <end position="833"/>
    </location>
</feature>
<feature type="transmembrane region" description="Helical" evidence="1">
    <location>
        <begin position="768"/>
        <end position="788"/>
    </location>
</feature>
<feature type="repeat" description="Sel1-like 1">
    <location>
        <begin position="103"/>
        <end position="139"/>
    </location>
</feature>
<feature type="repeat" description="Sel1-like 2">
    <location>
        <begin position="143"/>
        <end position="186"/>
    </location>
</feature>
<feature type="repeat" description="Sel1-like 3">
    <location>
        <begin position="187"/>
        <end position="222"/>
    </location>
</feature>
<feature type="repeat" description="Sel1-like 4">
    <location>
        <begin position="413"/>
        <end position="445"/>
    </location>
</feature>
<feature type="repeat" description="Sel1-like 5">
    <location>
        <begin position="552"/>
        <end position="595"/>
    </location>
</feature>
<feature type="repeat" description="Sel1-like 6">
    <location>
        <begin position="596"/>
        <end position="627"/>
    </location>
</feature>
<feature type="repeat" description="Sel1-like 7">
    <location>
        <begin position="628"/>
        <end position="663"/>
    </location>
</feature>
<feature type="region of interest" description="Disordered" evidence="2">
    <location>
        <begin position="805"/>
        <end position="824"/>
    </location>
</feature>
<feature type="compositionally biased region" description="Low complexity" evidence="2">
    <location>
        <begin position="809"/>
        <end position="819"/>
    </location>
</feature>
<feature type="glycosylation site" description="N-linked (GlcNAc...) asparagine" evidence="1">
    <location>
        <position position="101"/>
    </location>
</feature>
<feature type="glycosylation site" description="N-linked (GlcNAc...) asparagine" evidence="1">
    <location>
        <position position="123"/>
    </location>
</feature>
<feature type="glycosylation site" description="N-linked (GlcNAc...) asparagine" evidence="1">
    <location>
        <position position="142"/>
    </location>
</feature>
<feature type="glycosylation site" description="N-linked (GlcNAc...) asparagine" evidence="1">
    <location>
        <position position="429"/>
    </location>
</feature>
<feature type="glycosylation site" description="N-linked (GlcNAc...) asparagine" evidence="1">
    <location>
        <position position="611"/>
    </location>
</feature>